<proteinExistence type="evidence at protein level"/>
<protein>
    <recommendedName>
        <fullName>Synaptotagmin-5</fullName>
    </recommendedName>
    <alternativeName>
        <fullName evidence="8">Synaptotagmin IX</fullName>
    </alternativeName>
    <alternativeName>
        <fullName>Synaptotagmin V</fullName>
        <shortName>SytV</shortName>
    </alternativeName>
</protein>
<accession>Q9R0N5</accession>
<comment type="function">
    <text evidence="7">May be involved in Ca(2+)-dependent exocytosis of secretory vesicles through Ca(2+) and phospholipid binding to the C2 domain or may serve as Ca(2+) sensors in the process of vesicular trafficking and exocytosis. Regulates the Ca(2+)-dependent secretion of norepinephrine in PC12 cells. Required for export from the endocytic recycling compartment to the cell surface.</text>
</comment>
<comment type="cofactor">
    <cofactor evidence="5">
        <name>Ca(2+)</name>
        <dbReference type="ChEBI" id="CHEBI:29108"/>
    </cofactor>
    <text evidence="2">Binds 3 Ca(2+) ions per subunit. The ions are bound to the C2 domains.</text>
</comment>
<comment type="subunit">
    <text evidence="1 3">Homodimer (By similarity). Interacts with both alpha- and beta-tubulin (By similarity).</text>
</comment>
<comment type="subcellular location">
    <subcellularLocation>
        <location evidence="7">Cytoplasmic vesicle</location>
        <location evidence="7">Secretory vesicle</location>
        <location evidence="7">Synaptic vesicle membrane</location>
        <topology evidence="7">Single-pass membrane protein</topology>
    </subcellularLocation>
    <subcellularLocation>
        <location evidence="7">Recycling endosome membrane</location>
        <topology evidence="7">Single-pass membrane protein</topology>
    </subcellularLocation>
    <text>In mast cells, localizes to the endocytic recycling compartment.</text>
</comment>
<comment type="similarity">
    <text evidence="9">Belongs to the synaptotagmin family.</text>
</comment>
<dbReference type="EMBL" id="AB026806">
    <property type="protein sequence ID" value="BAA85778.1"/>
    <property type="molecule type" value="mRNA"/>
</dbReference>
<dbReference type="EMBL" id="BC047148">
    <property type="protein sequence ID" value="AAH47148.1"/>
    <property type="molecule type" value="mRNA"/>
</dbReference>
<dbReference type="CCDS" id="CCDS20738.1"/>
<dbReference type="RefSeq" id="NP_001347350.1">
    <property type="nucleotide sequence ID" value="NM_001360421.1"/>
</dbReference>
<dbReference type="RefSeq" id="NP_001347351.1">
    <property type="nucleotide sequence ID" value="NM_001360422.1"/>
</dbReference>
<dbReference type="RefSeq" id="NP_058604.1">
    <property type="nucleotide sequence ID" value="NM_016908.2"/>
</dbReference>
<dbReference type="RefSeq" id="XP_006540252.1">
    <property type="nucleotide sequence ID" value="XM_006540189.3"/>
</dbReference>
<dbReference type="RefSeq" id="XP_006540253.1">
    <property type="nucleotide sequence ID" value="XM_006540190.3"/>
</dbReference>
<dbReference type="SMR" id="Q9R0N5"/>
<dbReference type="BioGRID" id="207314">
    <property type="interactions" value="4"/>
</dbReference>
<dbReference type="FunCoup" id="Q9R0N5">
    <property type="interactions" value="314"/>
</dbReference>
<dbReference type="IntAct" id="Q9R0N5">
    <property type="interactions" value="2"/>
</dbReference>
<dbReference type="STRING" id="10090.ENSMUSP00000070322"/>
<dbReference type="iPTMnet" id="Q9R0N5"/>
<dbReference type="PhosphoSitePlus" id="Q9R0N5"/>
<dbReference type="SwissPalm" id="Q9R0N5"/>
<dbReference type="PaxDb" id="10090-ENSMUSP00000070322"/>
<dbReference type="PeptideAtlas" id="Q9R0N5"/>
<dbReference type="ProteomicsDB" id="263194"/>
<dbReference type="Antibodypedia" id="2420">
    <property type="antibodies" value="188 antibodies from 32 providers"/>
</dbReference>
<dbReference type="Ensembl" id="ENSMUST00000065957.7">
    <property type="protein sequence ID" value="ENSMUSP00000070322.6"/>
    <property type="gene ID" value="ENSMUSG00000004961.8"/>
</dbReference>
<dbReference type="GeneID" id="53420"/>
<dbReference type="UCSC" id="uc009exy.1">
    <property type="organism name" value="mouse"/>
</dbReference>
<dbReference type="AGR" id="MGI:1926368"/>
<dbReference type="MGI" id="MGI:1926368">
    <property type="gene designation" value="Syt5"/>
</dbReference>
<dbReference type="VEuPathDB" id="HostDB:ENSMUSG00000004961"/>
<dbReference type="eggNOG" id="KOG1028">
    <property type="taxonomic scope" value="Eukaryota"/>
</dbReference>
<dbReference type="GeneTree" id="ENSGT00940000161816"/>
<dbReference type="HOGENOM" id="CLU_023008_0_1_1"/>
<dbReference type="InParanoid" id="Q9R0N5"/>
<dbReference type="OMA" id="CCFCVYR"/>
<dbReference type="OrthoDB" id="67700at2759"/>
<dbReference type="PhylomeDB" id="Q9R0N5"/>
<dbReference type="TreeFam" id="TF315600"/>
<dbReference type="BioGRID-ORCS" id="53420">
    <property type="hits" value="2 hits in 79 CRISPR screens"/>
</dbReference>
<dbReference type="CD-CODE" id="CE726F99">
    <property type="entry name" value="Postsynaptic density"/>
</dbReference>
<dbReference type="ChiTaRS" id="Syt5">
    <property type="organism name" value="mouse"/>
</dbReference>
<dbReference type="PRO" id="PR:Q9R0N5"/>
<dbReference type="Proteomes" id="UP000000589">
    <property type="component" value="Chromosome 7"/>
</dbReference>
<dbReference type="RNAct" id="Q9R0N5">
    <property type="molecule type" value="protein"/>
</dbReference>
<dbReference type="Bgee" id="ENSMUSG00000004961">
    <property type="expression patterns" value="Expressed in superior frontal gyrus and 108 other cell types or tissues"/>
</dbReference>
<dbReference type="ExpressionAtlas" id="Q9R0N5">
    <property type="expression patterns" value="baseline and differential"/>
</dbReference>
<dbReference type="GO" id="GO:0031045">
    <property type="term" value="C:dense core granule"/>
    <property type="evidence" value="ECO:0000314"/>
    <property type="project" value="MGI"/>
</dbReference>
<dbReference type="GO" id="GO:0043005">
    <property type="term" value="C:neuron projection"/>
    <property type="evidence" value="ECO:0000314"/>
    <property type="project" value="MGI"/>
</dbReference>
<dbReference type="GO" id="GO:0043025">
    <property type="term" value="C:neuronal cell body"/>
    <property type="evidence" value="ECO:0000314"/>
    <property type="project" value="MGI"/>
</dbReference>
<dbReference type="GO" id="GO:0099012">
    <property type="term" value="C:neuronal dense core vesicle membrane"/>
    <property type="evidence" value="ECO:0000314"/>
    <property type="project" value="SynGO"/>
</dbReference>
<dbReference type="GO" id="GO:0048471">
    <property type="term" value="C:perinuclear region of cytoplasm"/>
    <property type="evidence" value="ECO:0000314"/>
    <property type="project" value="ParkinsonsUK-UCL"/>
</dbReference>
<dbReference type="GO" id="GO:0005886">
    <property type="term" value="C:plasma membrane"/>
    <property type="evidence" value="ECO:0000304"/>
    <property type="project" value="Reactome"/>
</dbReference>
<dbReference type="GO" id="GO:1990769">
    <property type="term" value="C:proximal neuron projection"/>
    <property type="evidence" value="ECO:0000314"/>
    <property type="project" value="ParkinsonsUK-UCL"/>
</dbReference>
<dbReference type="GO" id="GO:0055038">
    <property type="term" value="C:recycling endosome membrane"/>
    <property type="evidence" value="ECO:0007669"/>
    <property type="project" value="UniProtKB-SubCell"/>
</dbReference>
<dbReference type="GO" id="GO:0030672">
    <property type="term" value="C:synaptic vesicle membrane"/>
    <property type="evidence" value="ECO:0007669"/>
    <property type="project" value="UniProtKB-SubCell"/>
</dbReference>
<dbReference type="GO" id="GO:0005509">
    <property type="term" value="F:calcium ion binding"/>
    <property type="evidence" value="ECO:0000250"/>
    <property type="project" value="UniProtKB"/>
</dbReference>
<dbReference type="GO" id="GO:0005544">
    <property type="term" value="F:calcium-dependent phospholipid binding"/>
    <property type="evidence" value="ECO:0000314"/>
    <property type="project" value="ParkinsonsUK-UCL"/>
</dbReference>
<dbReference type="GO" id="GO:0030276">
    <property type="term" value="F:clathrin binding"/>
    <property type="evidence" value="ECO:0007669"/>
    <property type="project" value="Ensembl"/>
</dbReference>
<dbReference type="GO" id="GO:0005546">
    <property type="term" value="F:phosphatidylinositol-4,5-bisphosphate binding"/>
    <property type="evidence" value="ECO:0000314"/>
    <property type="project" value="ParkinsonsUK-UCL"/>
</dbReference>
<dbReference type="GO" id="GO:0001786">
    <property type="term" value="F:phosphatidylserine binding"/>
    <property type="evidence" value="ECO:0000314"/>
    <property type="project" value="ParkinsonsUK-UCL"/>
</dbReference>
<dbReference type="GO" id="GO:0046982">
    <property type="term" value="F:protein heterodimerization activity"/>
    <property type="evidence" value="ECO:0000353"/>
    <property type="project" value="UniProtKB"/>
</dbReference>
<dbReference type="GO" id="GO:0000149">
    <property type="term" value="F:SNARE binding"/>
    <property type="evidence" value="ECO:0000314"/>
    <property type="project" value="ParkinsonsUK-UCL"/>
</dbReference>
<dbReference type="GO" id="GO:0019905">
    <property type="term" value="F:syntaxin binding"/>
    <property type="evidence" value="ECO:0007669"/>
    <property type="project" value="Ensembl"/>
</dbReference>
<dbReference type="GO" id="GO:0017158">
    <property type="term" value="P:regulation of calcium ion-dependent exocytosis"/>
    <property type="evidence" value="ECO:0000315"/>
    <property type="project" value="ParkinsonsUK-UCL"/>
</dbReference>
<dbReference type="FunFam" id="2.60.40.150:FF:000007">
    <property type="entry name" value="Synaptotagmin 1"/>
    <property type="match status" value="1"/>
</dbReference>
<dbReference type="FunFam" id="2.60.40.150:FF:000111">
    <property type="entry name" value="synaptotagmin-5 isoform X1"/>
    <property type="match status" value="1"/>
</dbReference>
<dbReference type="Gene3D" id="2.60.40.150">
    <property type="entry name" value="C2 domain"/>
    <property type="match status" value="2"/>
</dbReference>
<dbReference type="InterPro" id="IPR000008">
    <property type="entry name" value="C2_dom"/>
</dbReference>
<dbReference type="InterPro" id="IPR035892">
    <property type="entry name" value="C2_domain_sf"/>
</dbReference>
<dbReference type="InterPro" id="IPR001565">
    <property type="entry name" value="Synaptotagmin"/>
</dbReference>
<dbReference type="PANTHER" id="PTHR10024">
    <property type="entry name" value="SYNAPTOTAGMIN"/>
    <property type="match status" value="1"/>
</dbReference>
<dbReference type="PANTHER" id="PTHR10024:SF282">
    <property type="entry name" value="SYNAPTOTAGMIN-5"/>
    <property type="match status" value="1"/>
</dbReference>
<dbReference type="Pfam" id="PF00168">
    <property type="entry name" value="C2"/>
    <property type="match status" value="2"/>
</dbReference>
<dbReference type="PRINTS" id="PR00360">
    <property type="entry name" value="C2DOMAIN"/>
</dbReference>
<dbReference type="PRINTS" id="PR00399">
    <property type="entry name" value="SYNAPTOTAGMN"/>
</dbReference>
<dbReference type="SMART" id="SM00239">
    <property type="entry name" value="C2"/>
    <property type="match status" value="2"/>
</dbReference>
<dbReference type="SUPFAM" id="SSF49562">
    <property type="entry name" value="C2 domain (Calcium/lipid-binding domain, CaLB)"/>
    <property type="match status" value="2"/>
</dbReference>
<dbReference type="PROSITE" id="PS50004">
    <property type="entry name" value="C2"/>
    <property type="match status" value="2"/>
</dbReference>
<organism>
    <name type="scientific">Mus musculus</name>
    <name type="common">Mouse</name>
    <dbReference type="NCBI Taxonomy" id="10090"/>
    <lineage>
        <taxon>Eukaryota</taxon>
        <taxon>Metazoa</taxon>
        <taxon>Chordata</taxon>
        <taxon>Craniata</taxon>
        <taxon>Vertebrata</taxon>
        <taxon>Euteleostomi</taxon>
        <taxon>Mammalia</taxon>
        <taxon>Eutheria</taxon>
        <taxon>Euarchontoglires</taxon>
        <taxon>Glires</taxon>
        <taxon>Rodentia</taxon>
        <taxon>Myomorpha</taxon>
        <taxon>Muroidea</taxon>
        <taxon>Muridae</taxon>
        <taxon>Murinae</taxon>
        <taxon>Mus</taxon>
        <taxon>Mus</taxon>
    </lineage>
</organism>
<name>SYT5_MOUSE</name>
<gene>
    <name type="primary">Syt5</name>
    <name evidence="8" type="synonym">Syt9</name>
</gene>
<keyword id="KW-0106">Calcium</keyword>
<keyword id="KW-0968">Cytoplasmic vesicle</keyword>
<keyword id="KW-0903">Direct protein sequencing</keyword>
<keyword id="KW-0967">Endosome</keyword>
<keyword id="KW-0472">Membrane</keyword>
<keyword id="KW-0479">Metal-binding</keyword>
<keyword id="KW-1185">Reference proteome</keyword>
<keyword id="KW-0677">Repeat</keyword>
<keyword id="KW-0770">Synapse</keyword>
<keyword id="KW-0812">Transmembrane</keyword>
<keyword id="KW-1133">Transmembrane helix</keyword>
<evidence type="ECO:0000250" key="1"/>
<evidence type="ECO:0000250" key="2">
    <source>
        <dbReference type="UniProtKB" id="O00445"/>
    </source>
</evidence>
<evidence type="ECO:0000250" key="3">
    <source>
        <dbReference type="UniProtKB" id="P47861"/>
    </source>
</evidence>
<evidence type="ECO:0000255" key="4"/>
<evidence type="ECO:0000255" key="5">
    <source>
        <dbReference type="PROSITE-ProRule" id="PRU00041"/>
    </source>
</evidence>
<evidence type="ECO:0000256" key="6">
    <source>
        <dbReference type="SAM" id="MobiDB-lite"/>
    </source>
</evidence>
<evidence type="ECO:0000269" key="7">
    <source>
    </source>
</evidence>
<evidence type="ECO:0000303" key="8">
    <source>
    </source>
</evidence>
<evidence type="ECO:0000305" key="9"/>
<sequence>MFPEPPTLGSPAPKTPPDSSRIRQGAVPAWVLATIVLGSGLLVFSSCFCLYRKRCRRRMGKKSQAQAQVHLQEVKELGRSYIDKVQPEIEELDRSPSMPGQQVSDKHQLGRLQYSLDYDFQTGQLLVGILQAQGLAALDLGGSSDPYVSVYLLPDKRRRHETKVHRQTLNPHFGETFAFKVPYVELGGRVLVMAVYDFDRFSRNDAIGEVRVPMSSVNLGRPVQAWRELQVAPKEEQEKLGDICFSLRYVPTAGKLTVIVLEAKNLKKMDVGGLSDPYVKVHLLQGGKKVRKKKTTIKKNTLNPYYNEAFSFEVPCDQVQKVQVELTVLDYDKLGKNEAIGRVAVGAAVGGAGLRHWADMLANPRRPIAQWHSLRPPDRARPIPAP</sequence>
<feature type="chain" id="PRO_0000183952" description="Synaptotagmin-5">
    <location>
        <begin position="1"/>
        <end position="386"/>
    </location>
</feature>
<feature type="topological domain" description="Vesicular" evidence="4">
    <location>
        <begin position="1"/>
        <end position="24"/>
    </location>
</feature>
<feature type="transmembrane region" description="Helical" evidence="4">
    <location>
        <begin position="25"/>
        <end position="45"/>
    </location>
</feature>
<feature type="topological domain" description="Cytoplasmic" evidence="4">
    <location>
        <begin position="46"/>
        <end position="386"/>
    </location>
</feature>
<feature type="domain" description="C2 1" evidence="5">
    <location>
        <begin position="108"/>
        <end position="227"/>
    </location>
</feature>
<feature type="domain" description="C2 2" evidence="5">
    <location>
        <begin position="239"/>
        <end position="372"/>
    </location>
</feature>
<feature type="region of interest" description="Disordered" evidence="6">
    <location>
        <begin position="1"/>
        <end position="21"/>
    </location>
</feature>
<feature type="compositionally biased region" description="Pro residues" evidence="6">
    <location>
        <begin position="1"/>
        <end position="16"/>
    </location>
</feature>
<feature type="binding site" evidence="5">
    <location>
        <position position="138"/>
    </location>
    <ligand>
        <name>Ca(2+)</name>
        <dbReference type="ChEBI" id="CHEBI:29108"/>
        <label>2</label>
    </ligand>
</feature>
<feature type="binding site" evidence="5">
    <location>
        <position position="139"/>
    </location>
    <ligand>
        <name>Ca(2+)</name>
        <dbReference type="ChEBI" id="CHEBI:29108"/>
        <label>1</label>
    </ligand>
</feature>
<feature type="binding site" evidence="5">
    <location>
        <position position="139"/>
    </location>
    <ligand>
        <name>Ca(2+)</name>
        <dbReference type="ChEBI" id="CHEBI:29108"/>
        <label>2</label>
    </ligand>
</feature>
<feature type="binding site" evidence="5">
    <location>
        <position position="145"/>
    </location>
    <ligand>
        <name>Ca(2+)</name>
        <dbReference type="ChEBI" id="CHEBI:29108"/>
        <label>1</label>
    </ligand>
</feature>
<feature type="binding site" evidence="5">
    <location>
        <position position="197"/>
    </location>
    <ligand>
        <name>Ca(2+)</name>
        <dbReference type="ChEBI" id="CHEBI:29108"/>
        <label>1</label>
    </ligand>
</feature>
<feature type="binding site" evidence="5">
    <location>
        <position position="197"/>
    </location>
    <ligand>
        <name>Ca(2+)</name>
        <dbReference type="ChEBI" id="CHEBI:29108"/>
        <label>2</label>
    </ligand>
</feature>
<feature type="binding site" evidence="5">
    <location>
        <position position="198"/>
    </location>
    <ligand>
        <name>Ca(2+)</name>
        <dbReference type="ChEBI" id="CHEBI:29108"/>
        <label>1</label>
    </ligand>
</feature>
<feature type="binding site" evidence="5">
    <location>
        <position position="199"/>
    </location>
    <ligand>
        <name>Ca(2+)</name>
        <dbReference type="ChEBI" id="CHEBI:29108"/>
        <label>1</label>
    </ligand>
</feature>
<feature type="binding site" evidence="5">
    <location>
        <position position="199"/>
    </location>
    <ligand>
        <name>Ca(2+)</name>
        <dbReference type="ChEBI" id="CHEBI:29108"/>
        <label>2</label>
    </ligand>
</feature>
<feature type="binding site" evidence="5">
    <location>
        <position position="199"/>
    </location>
    <ligand>
        <name>Ca(2+)</name>
        <dbReference type="ChEBI" id="CHEBI:29108"/>
        <label>3</label>
    </ligand>
</feature>
<feature type="binding site" evidence="5">
    <location>
        <position position="202"/>
    </location>
    <ligand>
        <name>Ca(2+)</name>
        <dbReference type="ChEBI" id="CHEBI:29108"/>
        <label>3</label>
    </ligand>
</feature>
<feature type="binding site" evidence="5">
    <location>
        <position position="205"/>
    </location>
    <ligand>
        <name>Ca(2+)</name>
        <dbReference type="ChEBI" id="CHEBI:29108"/>
        <label>2</label>
    </ligand>
</feature>
<feature type="binding site" evidence="5">
    <location>
        <position position="205"/>
    </location>
    <ligand>
        <name>Ca(2+)</name>
        <dbReference type="ChEBI" id="CHEBI:29108"/>
        <label>3</label>
    </ligand>
</feature>
<feature type="binding site" evidence="5">
    <location>
        <position position="270"/>
    </location>
    <ligand>
        <name>Ca(2+)</name>
        <dbReference type="ChEBI" id="CHEBI:29108"/>
        <label>4</label>
    </ligand>
</feature>
<feature type="binding site" evidence="5">
    <location>
        <position position="276"/>
    </location>
    <ligand>
        <name>Ca(2+)</name>
        <dbReference type="ChEBI" id="CHEBI:29108"/>
        <label>4</label>
    </ligand>
</feature>
<feature type="binding site" evidence="5">
    <location>
        <position position="330"/>
    </location>
    <ligand>
        <name>Ca(2+)</name>
        <dbReference type="ChEBI" id="CHEBI:29108"/>
        <label>4</label>
    </ligand>
</feature>
<feature type="binding site" evidence="5">
    <location>
        <position position="332"/>
    </location>
    <ligand>
        <name>Ca(2+)</name>
        <dbReference type="ChEBI" id="CHEBI:29108"/>
        <label>4</label>
    </ligand>
</feature>
<reference key="1">
    <citation type="journal article" date="1999" name="J. Biol. Chem.">
        <title>Conserved N-terminal cysteine motif is essential for homo- and heterodimer formation of synaptotagmins III, V, VI, and X.</title>
        <authorList>
            <person name="Fukuda M."/>
            <person name="Kanno E."/>
            <person name="Mikoshiba K."/>
        </authorList>
    </citation>
    <scope>NUCLEOTIDE SEQUENCE [MRNA]</scope>
    <source>
        <strain>ICR</strain>
        <tissue>Cerebellum</tissue>
    </source>
</reference>
<reference key="2">
    <citation type="journal article" date="2004" name="Genome Res.">
        <title>The status, quality, and expansion of the NIH full-length cDNA project: the Mammalian Gene Collection (MGC).</title>
        <authorList>
            <consortium name="The MGC Project Team"/>
        </authorList>
    </citation>
    <scope>NUCLEOTIDE SEQUENCE [LARGE SCALE MRNA]</scope>
    <source>
        <tissue>Eye</tissue>
    </source>
</reference>
<reference key="3">
    <citation type="submission" date="2009-01" db="UniProtKB">
        <authorList>
            <person name="Lubec G."/>
            <person name="Kang S.U."/>
            <person name="Sunyer B."/>
            <person name="Chen W.-Q."/>
        </authorList>
    </citation>
    <scope>PROTEIN SEQUENCE OF 57-61; 240-248; 256-264 AND 269-280</scope>
    <scope>IDENTIFICATION BY MASS SPECTROMETRY</scope>
    <source>
        <strain>C57BL/6J</strain>
        <strain>OF1</strain>
        <tissue>Brain</tissue>
        <tissue>Hippocampus</tissue>
    </source>
</reference>
<reference key="4">
    <citation type="journal article" date="2002" name="J. Biol. Chem.">
        <title>Synaptotagmin IX regulates Ca2+-dependent secretion in PC12 cells.</title>
        <authorList>
            <person name="Fukuda M."/>
            <person name="Kowalchyk J.A."/>
            <person name="Zhang X."/>
            <person name="Martin T.F.J."/>
            <person name="Mikoshiba K."/>
        </authorList>
    </citation>
    <scope>FUNCTION</scope>
    <scope>SUBCELLULAR LOCATION</scope>
</reference>